<feature type="signal peptide" evidence="1">
    <location>
        <begin position="1"/>
        <end position="28"/>
    </location>
</feature>
<feature type="chain" id="PRO_0000001340" description="Alpha-amylase">
    <location>
        <begin position="29"/>
        <end position="566"/>
    </location>
</feature>
<feature type="domain" description="CBM20" evidence="2">
    <location>
        <begin position="465"/>
        <end position="566"/>
    </location>
</feature>
<feature type="active site" description="Nucleophile" evidence="1">
    <location>
        <position position="205"/>
    </location>
</feature>
<feature type="active site" description="Proton donor" evidence="1">
    <location>
        <position position="232"/>
    </location>
</feature>
<feature type="binding site" evidence="1">
    <location>
        <position position="120"/>
    </location>
    <ligand>
        <name>Ca(2+)</name>
        <dbReference type="ChEBI" id="CHEBI:29108"/>
    </ligand>
</feature>
<feature type="binding site" evidence="1">
    <location>
        <position position="166"/>
    </location>
    <ligand>
        <name>Ca(2+)</name>
        <dbReference type="ChEBI" id="CHEBI:29108"/>
    </ligand>
</feature>
<feature type="binding site" evidence="1">
    <location>
        <position position="175"/>
    </location>
    <ligand>
        <name>Ca(2+)</name>
        <dbReference type="ChEBI" id="CHEBI:29108"/>
    </ligand>
</feature>
<feature type="binding site" evidence="1">
    <location>
        <position position="209"/>
    </location>
    <ligand>
        <name>Ca(2+)</name>
        <dbReference type="ChEBI" id="CHEBI:29108"/>
    </ligand>
</feature>
<feature type="site" description="Transition state stabilizer" evidence="1">
    <location>
        <position position="296"/>
    </location>
</feature>
<organism>
    <name type="scientific">Streptomyces griseus</name>
    <dbReference type="NCBI Taxonomy" id="1911"/>
    <lineage>
        <taxon>Bacteria</taxon>
        <taxon>Bacillati</taxon>
        <taxon>Actinomycetota</taxon>
        <taxon>Actinomycetes</taxon>
        <taxon>Kitasatosporales</taxon>
        <taxon>Streptomycetaceae</taxon>
        <taxon>Streptomyces</taxon>
    </lineage>
</organism>
<name>AMY_STRGR</name>
<dbReference type="EC" id="3.2.1.1"/>
<dbReference type="EMBL" id="X57568">
    <property type="protein sequence ID" value="CAA40798.1"/>
    <property type="molecule type" value="Genomic_DNA"/>
</dbReference>
<dbReference type="PIR" id="S14063">
    <property type="entry name" value="S14063"/>
</dbReference>
<dbReference type="SMR" id="P30270"/>
<dbReference type="STRING" id="1911.GCA_001715295_03751"/>
<dbReference type="CAZy" id="CBM20">
    <property type="family name" value="Carbohydrate-Binding Module Family 20"/>
</dbReference>
<dbReference type="CAZy" id="GH13">
    <property type="family name" value="Glycoside Hydrolase Family 13"/>
</dbReference>
<dbReference type="GO" id="GO:0004556">
    <property type="term" value="F:alpha-amylase activity"/>
    <property type="evidence" value="ECO:0007669"/>
    <property type="project" value="UniProtKB-EC"/>
</dbReference>
<dbReference type="GO" id="GO:0046872">
    <property type="term" value="F:metal ion binding"/>
    <property type="evidence" value="ECO:0007669"/>
    <property type="project" value="UniProtKB-KW"/>
</dbReference>
<dbReference type="GO" id="GO:2001070">
    <property type="term" value="F:starch binding"/>
    <property type="evidence" value="ECO:0007669"/>
    <property type="project" value="InterPro"/>
</dbReference>
<dbReference type="GO" id="GO:0005975">
    <property type="term" value="P:carbohydrate metabolic process"/>
    <property type="evidence" value="ECO:0007669"/>
    <property type="project" value="InterPro"/>
</dbReference>
<dbReference type="CDD" id="cd11317">
    <property type="entry name" value="AmyAc_bac_euk_AmyA"/>
    <property type="match status" value="1"/>
</dbReference>
<dbReference type="CDD" id="cd05808">
    <property type="entry name" value="CBM20_alpha_amylase"/>
    <property type="match status" value="1"/>
</dbReference>
<dbReference type="Gene3D" id="3.20.20.80">
    <property type="entry name" value="Glycosidases"/>
    <property type="match status" value="1"/>
</dbReference>
<dbReference type="Gene3D" id="2.60.40.1180">
    <property type="entry name" value="Golgi alpha-mannosidase II"/>
    <property type="match status" value="1"/>
</dbReference>
<dbReference type="Gene3D" id="2.60.40.10">
    <property type="entry name" value="Immunoglobulins"/>
    <property type="match status" value="1"/>
</dbReference>
<dbReference type="InterPro" id="IPR006048">
    <property type="entry name" value="A-amylase/branching_C"/>
</dbReference>
<dbReference type="InterPro" id="IPR031319">
    <property type="entry name" value="A-amylase_C"/>
</dbReference>
<dbReference type="InterPro" id="IPR006046">
    <property type="entry name" value="Alpha_amylase"/>
</dbReference>
<dbReference type="InterPro" id="IPR013784">
    <property type="entry name" value="Carb-bd-like_fold"/>
</dbReference>
<dbReference type="InterPro" id="IPR002044">
    <property type="entry name" value="CBM20"/>
</dbReference>
<dbReference type="InterPro" id="IPR006047">
    <property type="entry name" value="Glyco_hydro_13_cat_dom"/>
</dbReference>
<dbReference type="InterPro" id="IPR013780">
    <property type="entry name" value="Glyco_hydro_b"/>
</dbReference>
<dbReference type="InterPro" id="IPR017853">
    <property type="entry name" value="Glycoside_hydrolase_SF"/>
</dbReference>
<dbReference type="InterPro" id="IPR013783">
    <property type="entry name" value="Ig-like_fold"/>
</dbReference>
<dbReference type="PANTHER" id="PTHR43447">
    <property type="entry name" value="ALPHA-AMYLASE"/>
    <property type="match status" value="1"/>
</dbReference>
<dbReference type="Pfam" id="PF00128">
    <property type="entry name" value="Alpha-amylase"/>
    <property type="match status" value="1"/>
</dbReference>
<dbReference type="Pfam" id="PF02806">
    <property type="entry name" value="Alpha-amylase_C"/>
    <property type="match status" value="1"/>
</dbReference>
<dbReference type="Pfam" id="PF00686">
    <property type="entry name" value="CBM_20"/>
    <property type="match status" value="1"/>
</dbReference>
<dbReference type="PRINTS" id="PR00110">
    <property type="entry name" value="ALPHAAMYLASE"/>
</dbReference>
<dbReference type="SMART" id="SM00642">
    <property type="entry name" value="Aamy"/>
    <property type="match status" value="1"/>
</dbReference>
<dbReference type="SMART" id="SM00632">
    <property type="entry name" value="Aamy_C"/>
    <property type="match status" value="1"/>
</dbReference>
<dbReference type="SMART" id="SM01065">
    <property type="entry name" value="CBM_2"/>
    <property type="match status" value="1"/>
</dbReference>
<dbReference type="SUPFAM" id="SSF51445">
    <property type="entry name" value="(Trans)glycosidases"/>
    <property type="match status" value="1"/>
</dbReference>
<dbReference type="SUPFAM" id="SSF51011">
    <property type="entry name" value="Glycosyl hydrolase domain"/>
    <property type="match status" value="1"/>
</dbReference>
<dbReference type="SUPFAM" id="SSF49452">
    <property type="entry name" value="Starch-binding domain-like"/>
    <property type="match status" value="1"/>
</dbReference>
<dbReference type="PROSITE" id="PS51166">
    <property type="entry name" value="CBM20"/>
    <property type="match status" value="1"/>
</dbReference>
<protein>
    <recommendedName>
        <fullName>Alpha-amylase</fullName>
        <ecNumber>3.2.1.1</ecNumber>
    </recommendedName>
    <alternativeName>
        <fullName>1,4-alpha-D-glucan glucanohydrolase</fullName>
    </alternativeName>
</protein>
<reference key="1">
    <citation type="journal article" date="1991" name="Mol. Gen. Genet.">
        <title>Cloning, characterization and expression of an alpha-amylase gene from Streptomyces griseus IMRU3570.</title>
        <authorList>
            <person name="Vigal T."/>
            <person name="Gil J.A."/>
            <person name="Daza A."/>
            <person name="Garcia-Gonzalez M.D."/>
            <person name="Martin J.F."/>
        </authorList>
    </citation>
    <scope>NUCLEOTIDE SEQUENCE [GENOMIC DNA]</scope>
    <source>
        <strain>IMRU 3570</strain>
    </source>
</reference>
<gene>
    <name type="primary">amy</name>
</gene>
<proteinExistence type="inferred from homology"/>
<keyword id="KW-0106">Calcium</keyword>
<keyword id="KW-0119">Carbohydrate metabolism</keyword>
<keyword id="KW-0326">Glycosidase</keyword>
<keyword id="KW-0378">Hydrolase</keyword>
<keyword id="KW-0479">Metal-binding</keyword>
<keyword id="KW-0732">Signal</keyword>
<evidence type="ECO:0000250" key="1"/>
<evidence type="ECO:0000255" key="2">
    <source>
        <dbReference type="PROSITE-ProRule" id="PRU00594"/>
    </source>
</evidence>
<evidence type="ECO:0000305" key="3"/>
<comment type="catalytic activity">
    <reaction>
        <text>Endohydrolysis of (1-&gt;4)-alpha-D-glucosidic linkages in polysaccharides containing three or more (1-&gt;4)-alpha-linked D-glucose units.</text>
        <dbReference type="EC" id="3.2.1.1"/>
    </reaction>
</comment>
<comment type="cofactor">
    <cofactor evidence="1">
        <name>Ca(2+)</name>
        <dbReference type="ChEBI" id="CHEBI:29108"/>
    </cofactor>
    <text evidence="1">Binds 1 Ca(2+) ion per subunit.</text>
</comment>
<comment type="subunit">
    <text evidence="1">Monomer.</text>
</comment>
<comment type="similarity">
    <text evidence="3">Belongs to the glycosyl hydrolase 13 family.</text>
</comment>
<sequence>MARRLATASLAVLAAAATALTAPTPAAAAPPGAKDVTAVLFEWKFASVARACTDSLGPAGYGYVQVSPPQEHIQGSQWWTSYQPVSYKIAGRLGDRAAFKSMVDTCHAAGVKVVADSVINHMAAGSGTGTGGSAYQKYDYPGIWSGADMDDCRSEINDYGNRANVQNCELVGLADLDTGEPYVRDRIAAYLNDLLLLGVDGFRIDAAKHMPAADLTAIKAKVGNGSTYWKQEAIHGAGEAVQPSEYLGTGDVQEFRYARDLKRVFQNENLAHLKNFGEDWGYMASGKSAVFVDNHDTERGGDTLNYKNGSAYTLAGVFMLAWPYGSPDVHSGYEFTDHDAGPPNGGTVNACYSDGWKCQHAWPELSSMVGLRNTASGQPVTNWWDNGGDQIAFGRGDKAYVAINHEGSALNRTFQSGLPGGAYCDVQSGRSVTVGSDGTFTATVAAGTALALHTGARTCSGGGTGPGTGQTSASFHVNATTAWGENIYVTGDQAALGNWDPARALKLDPAAYPVWKLDVPLAAGTPFQYKYLRKDAAGKAVWESGANRTATVGTTGALTLNDTWRG</sequence>
<accession>P30270</accession>